<gene>
    <name type="primary">TMEM212</name>
</gene>
<keyword id="KW-0472">Membrane</keyword>
<keyword id="KW-1185">Reference proteome</keyword>
<keyword id="KW-0812">Transmembrane</keyword>
<keyword id="KW-1133">Transmembrane helix</keyword>
<dbReference type="EMBL" id="AK026825">
    <property type="status" value="NOT_ANNOTATED_CDS"/>
    <property type="molecule type" value="mRNA"/>
</dbReference>
<dbReference type="EMBL" id="AC055714">
    <property type="status" value="NOT_ANNOTATED_CDS"/>
    <property type="molecule type" value="Genomic_DNA"/>
</dbReference>
<dbReference type="CCDS" id="CCDS46958.1"/>
<dbReference type="RefSeq" id="NP_001157908.1">
    <property type="nucleotide sequence ID" value="NM_001164436.2"/>
</dbReference>
<dbReference type="RefSeq" id="XP_011511119.1">
    <property type="nucleotide sequence ID" value="XM_011512817.1"/>
</dbReference>
<dbReference type="RefSeq" id="XP_054202455.1">
    <property type="nucleotide sequence ID" value="XM_054346480.1"/>
</dbReference>
<dbReference type="BioGRID" id="133020">
    <property type="interactions" value="2"/>
</dbReference>
<dbReference type="FunCoup" id="A6NML5">
    <property type="interactions" value="5"/>
</dbReference>
<dbReference type="STRING" id="9606.ENSP00000334072"/>
<dbReference type="TCDB" id="1.A.37.7.1">
    <property type="family name" value="the cd20 ca(2+) channel (cd20) family"/>
</dbReference>
<dbReference type="BioMuta" id="TMEM212"/>
<dbReference type="PaxDb" id="9606-ENSP00000334072"/>
<dbReference type="ProteomicsDB" id="1546"/>
<dbReference type="Antibodypedia" id="64009">
    <property type="antibodies" value="8 antibodies from 5 providers"/>
</dbReference>
<dbReference type="DNASU" id="389177"/>
<dbReference type="Ensembl" id="ENST00000334567.9">
    <property type="protein sequence ID" value="ENSP00000334072.5"/>
    <property type="gene ID" value="ENSG00000186329.9"/>
</dbReference>
<dbReference type="Ensembl" id="ENST00000619900.4">
    <property type="protein sequence ID" value="ENSP00000484106.1"/>
    <property type="gene ID" value="ENSG00000186329.9"/>
</dbReference>
<dbReference type="GeneID" id="389177"/>
<dbReference type="KEGG" id="hsa:389177"/>
<dbReference type="MANE-Select" id="ENST00000334567.9">
    <property type="protein sequence ID" value="ENSP00000334072.5"/>
    <property type="RefSeq nucleotide sequence ID" value="NM_001164436.2"/>
    <property type="RefSeq protein sequence ID" value="NP_001157908.1"/>
</dbReference>
<dbReference type="UCSC" id="uc003fhw.2">
    <property type="organism name" value="human"/>
</dbReference>
<dbReference type="AGR" id="HGNC:34295"/>
<dbReference type="CTD" id="389177"/>
<dbReference type="DisGeNET" id="389177"/>
<dbReference type="GeneCards" id="TMEM212"/>
<dbReference type="HGNC" id="HGNC:34295">
    <property type="gene designation" value="TMEM212"/>
</dbReference>
<dbReference type="HPA" id="ENSG00000186329">
    <property type="expression patterns" value="Tissue enriched (fallopian)"/>
</dbReference>
<dbReference type="neXtProt" id="NX_A6NML5"/>
<dbReference type="OpenTargets" id="ENSG00000186329"/>
<dbReference type="PharmGKB" id="PA162406475"/>
<dbReference type="VEuPathDB" id="HostDB:ENSG00000186329"/>
<dbReference type="eggNOG" id="ENOG502RXQ2">
    <property type="taxonomic scope" value="Eukaryota"/>
</dbReference>
<dbReference type="GeneTree" id="ENSGT00390000016029"/>
<dbReference type="InParanoid" id="A6NML5"/>
<dbReference type="OMA" id="HYEWYHL"/>
<dbReference type="OrthoDB" id="9446700at2759"/>
<dbReference type="PAN-GO" id="A6NML5">
    <property type="GO annotations" value="0 GO annotations based on evolutionary models"/>
</dbReference>
<dbReference type="PhylomeDB" id="A6NML5"/>
<dbReference type="TreeFam" id="TF337661"/>
<dbReference type="PathwayCommons" id="A6NML5"/>
<dbReference type="SignaLink" id="A6NML5"/>
<dbReference type="BioGRID-ORCS" id="389177">
    <property type="hits" value="11 hits in 1146 CRISPR screens"/>
</dbReference>
<dbReference type="ChiTaRS" id="TMEM212">
    <property type="organism name" value="human"/>
</dbReference>
<dbReference type="GenomeRNAi" id="389177"/>
<dbReference type="Pharos" id="A6NML5">
    <property type="development level" value="Tdark"/>
</dbReference>
<dbReference type="PRO" id="PR:A6NML5"/>
<dbReference type="Proteomes" id="UP000005640">
    <property type="component" value="Chromosome 3"/>
</dbReference>
<dbReference type="RNAct" id="A6NML5">
    <property type="molecule type" value="protein"/>
</dbReference>
<dbReference type="Bgee" id="ENSG00000186329">
    <property type="expression patterns" value="Expressed in buccal mucosa cell and 114 other cell types or tissues"/>
</dbReference>
<dbReference type="ExpressionAtlas" id="A6NML5">
    <property type="expression patterns" value="baseline and differential"/>
</dbReference>
<dbReference type="GO" id="GO:0016020">
    <property type="term" value="C:membrane"/>
    <property type="evidence" value="ECO:0007669"/>
    <property type="project" value="UniProtKB-SubCell"/>
</dbReference>
<organism>
    <name type="scientific">Homo sapiens</name>
    <name type="common">Human</name>
    <dbReference type="NCBI Taxonomy" id="9606"/>
    <lineage>
        <taxon>Eukaryota</taxon>
        <taxon>Metazoa</taxon>
        <taxon>Chordata</taxon>
        <taxon>Craniata</taxon>
        <taxon>Vertebrata</taxon>
        <taxon>Euteleostomi</taxon>
        <taxon>Mammalia</taxon>
        <taxon>Eutheria</taxon>
        <taxon>Euarchontoglires</taxon>
        <taxon>Primates</taxon>
        <taxon>Haplorrhini</taxon>
        <taxon>Catarrhini</taxon>
        <taxon>Hominidae</taxon>
        <taxon>Homo</taxon>
    </lineage>
</organism>
<accession>A6NML5</accession>
<proteinExistence type="evidence at transcript level"/>
<reference key="1">
    <citation type="journal article" date="2004" name="Nat. Genet.">
        <title>Complete sequencing and characterization of 21,243 full-length human cDNAs.</title>
        <authorList>
            <person name="Ota T."/>
            <person name="Suzuki Y."/>
            <person name="Nishikawa T."/>
            <person name="Otsuki T."/>
            <person name="Sugiyama T."/>
            <person name="Irie R."/>
            <person name="Wakamatsu A."/>
            <person name="Hayashi K."/>
            <person name="Sato H."/>
            <person name="Nagai K."/>
            <person name="Kimura K."/>
            <person name="Makita H."/>
            <person name="Sekine M."/>
            <person name="Obayashi M."/>
            <person name="Nishi T."/>
            <person name="Shibahara T."/>
            <person name="Tanaka T."/>
            <person name="Ishii S."/>
            <person name="Yamamoto J."/>
            <person name="Saito K."/>
            <person name="Kawai Y."/>
            <person name="Isono Y."/>
            <person name="Nakamura Y."/>
            <person name="Nagahari K."/>
            <person name="Murakami K."/>
            <person name="Yasuda T."/>
            <person name="Iwayanagi T."/>
            <person name="Wagatsuma M."/>
            <person name="Shiratori A."/>
            <person name="Sudo H."/>
            <person name="Hosoiri T."/>
            <person name="Kaku Y."/>
            <person name="Kodaira H."/>
            <person name="Kondo H."/>
            <person name="Sugawara M."/>
            <person name="Takahashi M."/>
            <person name="Kanda K."/>
            <person name="Yokoi T."/>
            <person name="Furuya T."/>
            <person name="Kikkawa E."/>
            <person name="Omura Y."/>
            <person name="Abe K."/>
            <person name="Kamihara K."/>
            <person name="Katsuta N."/>
            <person name="Sato K."/>
            <person name="Tanikawa M."/>
            <person name="Yamazaki M."/>
            <person name="Ninomiya K."/>
            <person name="Ishibashi T."/>
            <person name="Yamashita H."/>
            <person name="Murakawa K."/>
            <person name="Fujimori K."/>
            <person name="Tanai H."/>
            <person name="Kimata M."/>
            <person name="Watanabe M."/>
            <person name="Hiraoka S."/>
            <person name="Chiba Y."/>
            <person name="Ishida S."/>
            <person name="Ono Y."/>
            <person name="Takiguchi S."/>
            <person name="Watanabe S."/>
            <person name="Yosida M."/>
            <person name="Hotuta T."/>
            <person name="Kusano J."/>
            <person name="Kanehori K."/>
            <person name="Takahashi-Fujii A."/>
            <person name="Hara H."/>
            <person name="Tanase T.-O."/>
            <person name="Nomura Y."/>
            <person name="Togiya S."/>
            <person name="Komai F."/>
            <person name="Hara R."/>
            <person name="Takeuchi K."/>
            <person name="Arita M."/>
            <person name="Imose N."/>
            <person name="Musashino K."/>
            <person name="Yuuki H."/>
            <person name="Oshima A."/>
            <person name="Sasaki N."/>
            <person name="Aotsuka S."/>
            <person name="Yoshikawa Y."/>
            <person name="Matsunawa H."/>
            <person name="Ichihara T."/>
            <person name="Shiohata N."/>
            <person name="Sano S."/>
            <person name="Moriya S."/>
            <person name="Momiyama H."/>
            <person name="Satoh N."/>
            <person name="Takami S."/>
            <person name="Terashima Y."/>
            <person name="Suzuki O."/>
            <person name="Nakagawa S."/>
            <person name="Senoh A."/>
            <person name="Mizoguchi H."/>
            <person name="Goto Y."/>
            <person name="Shimizu F."/>
            <person name="Wakebe H."/>
            <person name="Hishigaki H."/>
            <person name="Watanabe T."/>
            <person name="Sugiyama A."/>
            <person name="Takemoto M."/>
            <person name="Kawakami B."/>
            <person name="Yamazaki M."/>
            <person name="Watanabe K."/>
            <person name="Kumagai A."/>
            <person name="Itakura S."/>
            <person name="Fukuzumi Y."/>
            <person name="Fujimori Y."/>
            <person name="Komiyama M."/>
            <person name="Tashiro H."/>
            <person name="Tanigami A."/>
            <person name="Fujiwara T."/>
            <person name="Ono T."/>
            <person name="Yamada K."/>
            <person name="Fujii Y."/>
            <person name="Ozaki K."/>
            <person name="Hirao M."/>
            <person name="Ohmori Y."/>
            <person name="Kawabata A."/>
            <person name="Hikiji T."/>
            <person name="Kobatake N."/>
            <person name="Inagaki H."/>
            <person name="Ikema Y."/>
            <person name="Okamoto S."/>
            <person name="Okitani R."/>
            <person name="Kawakami T."/>
            <person name="Noguchi S."/>
            <person name="Itoh T."/>
            <person name="Shigeta K."/>
            <person name="Senba T."/>
            <person name="Matsumura K."/>
            <person name="Nakajima Y."/>
            <person name="Mizuno T."/>
            <person name="Morinaga M."/>
            <person name="Sasaki M."/>
            <person name="Togashi T."/>
            <person name="Oyama M."/>
            <person name="Hata H."/>
            <person name="Watanabe M."/>
            <person name="Komatsu T."/>
            <person name="Mizushima-Sugano J."/>
            <person name="Satoh T."/>
            <person name="Shirai Y."/>
            <person name="Takahashi Y."/>
            <person name="Nakagawa K."/>
            <person name="Okumura K."/>
            <person name="Nagase T."/>
            <person name="Nomura N."/>
            <person name="Kikuchi H."/>
            <person name="Masuho Y."/>
            <person name="Yamashita R."/>
            <person name="Nakai K."/>
            <person name="Yada T."/>
            <person name="Nakamura Y."/>
            <person name="Ohara O."/>
            <person name="Isogai T."/>
            <person name="Sugano S."/>
        </authorList>
    </citation>
    <scope>NUCLEOTIDE SEQUENCE [LARGE SCALE MRNA]</scope>
    <source>
        <tissue>Lung</tissue>
    </source>
</reference>
<reference key="2">
    <citation type="journal article" date="2006" name="Nature">
        <title>The DNA sequence, annotation and analysis of human chromosome 3.</title>
        <authorList>
            <person name="Muzny D.M."/>
            <person name="Scherer S.E."/>
            <person name="Kaul R."/>
            <person name="Wang J."/>
            <person name="Yu J."/>
            <person name="Sudbrak R."/>
            <person name="Buhay C.J."/>
            <person name="Chen R."/>
            <person name="Cree A."/>
            <person name="Ding Y."/>
            <person name="Dugan-Rocha S."/>
            <person name="Gill R."/>
            <person name="Gunaratne P."/>
            <person name="Harris R.A."/>
            <person name="Hawes A.C."/>
            <person name="Hernandez J."/>
            <person name="Hodgson A.V."/>
            <person name="Hume J."/>
            <person name="Jackson A."/>
            <person name="Khan Z.M."/>
            <person name="Kovar-Smith C."/>
            <person name="Lewis L.R."/>
            <person name="Lozado R.J."/>
            <person name="Metzker M.L."/>
            <person name="Milosavljevic A."/>
            <person name="Miner G.R."/>
            <person name="Morgan M.B."/>
            <person name="Nazareth L.V."/>
            <person name="Scott G."/>
            <person name="Sodergren E."/>
            <person name="Song X.-Z."/>
            <person name="Steffen D."/>
            <person name="Wei S."/>
            <person name="Wheeler D.A."/>
            <person name="Wright M.W."/>
            <person name="Worley K.C."/>
            <person name="Yuan Y."/>
            <person name="Zhang Z."/>
            <person name="Adams C.Q."/>
            <person name="Ansari-Lari M.A."/>
            <person name="Ayele M."/>
            <person name="Brown M.J."/>
            <person name="Chen G."/>
            <person name="Chen Z."/>
            <person name="Clendenning J."/>
            <person name="Clerc-Blankenburg K.P."/>
            <person name="Chen R."/>
            <person name="Chen Z."/>
            <person name="Davis C."/>
            <person name="Delgado O."/>
            <person name="Dinh H.H."/>
            <person name="Dong W."/>
            <person name="Draper H."/>
            <person name="Ernst S."/>
            <person name="Fu G."/>
            <person name="Gonzalez-Garay M.L."/>
            <person name="Garcia D.K."/>
            <person name="Gillett W."/>
            <person name="Gu J."/>
            <person name="Hao B."/>
            <person name="Haugen E."/>
            <person name="Havlak P."/>
            <person name="He X."/>
            <person name="Hennig S."/>
            <person name="Hu S."/>
            <person name="Huang W."/>
            <person name="Jackson L.R."/>
            <person name="Jacob L.S."/>
            <person name="Kelly S.H."/>
            <person name="Kube M."/>
            <person name="Levy R."/>
            <person name="Li Z."/>
            <person name="Liu B."/>
            <person name="Liu J."/>
            <person name="Liu W."/>
            <person name="Lu J."/>
            <person name="Maheshwari M."/>
            <person name="Nguyen B.-V."/>
            <person name="Okwuonu G.O."/>
            <person name="Palmeiri A."/>
            <person name="Pasternak S."/>
            <person name="Perez L.M."/>
            <person name="Phelps K.A."/>
            <person name="Plopper F.J."/>
            <person name="Qiang B."/>
            <person name="Raymond C."/>
            <person name="Rodriguez R."/>
            <person name="Saenphimmachak C."/>
            <person name="Santibanez J."/>
            <person name="Shen H."/>
            <person name="Shen Y."/>
            <person name="Subramanian S."/>
            <person name="Tabor P.E."/>
            <person name="Verduzco D."/>
            <person name="Waldron L."/>
            <person name="Wang J."/>
            <person name="Wang J."/>
            <person name="Wang Q."/>
            <person name="Williams G.A."/>
            <person name="Wong G.K.-S."/>
            <person name="Yao Z."/>
            <person name="Zhang J."/>
            <person name="Zhang X."/>
            <person name="Zhao G."/>
            <person name="Zhou J."/>
            <person name="Zhou Y."/>
            <person name="Nelson D."/>
            <person name="Lehrach H."/>
            <person name="Reinhardt R."/>
            <person name="Naylor S.L."/>
            <person name="Yang H."/>
            <person name="Olson M."/>
            <person name="Weinstock G."/>
            <person name="Gibbs R.A."/>
        </authorList>
    </citation>
    <scope>NUCLEOTIDE SEQUENCE [LARGE SCALE GENOMIC DNA]</scope>
</reference>
<name>TM212_HUMAN</name>
<sequence>MKGLYQAAGRILVTLGILSVCSGVIAFFPVFSYKPWFTGWSVRIACPIWNGALAITTGVLLLLAYREWTQRYLGEATFTFVILSIMGCPLHFAIALESALLGPYCFYSFSGIAGTNYLGYAVTFPYPYAKFPLACVDPPHYEEYHLTLQALDLCLSFTLLCTSLTVFIKLSARLIQNGHINMQLPAGNPNPFSP</sequence>
<evidence type="ECO:0000255" key="1"/>
<evidence type="ECO:0000305" key="2"/>
<comment type="subcellular location">
    <subcellularLocation>
        <location evidence="2">Membrane</location>
        <topology evidence="2">Multi-pass membrane protein</topology>
    </subcellularLocation>
</comment>
<protein>
    <recommendedName>
        <fullName>Transmembrane protein 212</fullName>
    </recommendedName>
</protein>
<feature type="chain" id="PRO_0000341207" description="Transmembrane protein 212">
    <location>
        <begin position="1"/>
        <end position="194"/>
    </location>
</feature>
<feature type="transmembrane region" description="Helical" evidence="1">
    <location>
        <begin position="11"/>
        <end position="31"/>
    </location>
</feature>
<feature type="transmembrane region" description="Helical" evidence="1">
    <location>
        <begin position="44"/>
        <end position="64"/>
    </location>
</feature>
<feature type="transmembrane region" description="Helical" evidence="1">
    <location>
        <begin position="76"/>
        <end position="96"/>
    </location>
</feature>
<feature type="transmembrane region" description="Helical" evidence="1">
    <location>
        <begin position="99"/>
        <end position="119"/>
    </location>
</feature>
<feature type="transmembrane region" description="Helical" evidence="1">
    <location>
        <begin position="148"/>
        <end position="168"/>
    </location>
</feature>